<keyword id="KW-0285">Flavoprotein</keyword>
<keyword id="KW-0288">FMN</keyword>
<keyword id="KW-0560">Oxidoreductase</keyword>
<keyword id="KW-0664">Pyridoxine biosynthesis</keyword>
<keyword id="KW-1185">Reference proteome</keyword>
<organism>
    <name type="scientific">Ruegeria sp. (strain TM1040)</name>
    <name type="common">Silicibacter sp.</name>
    <dbReference type="NCBI Taxonomy" id="292414"/>
    <lineage>
        <taxon>Bacteria</taxon>
        <taxon>Pseudomonadati</taxon>
        <taxon>Pseudomonadota</taxon>
        <taxon>Alphaproteobacteria</taxon>
        <taxon>Rhodobacterales</taxon>
        <taxon>Roseobacteraceae</taxon>
        <taxon>Ruegeria</taxon>
    </lineage>
</organism>
<evidence type="ECO:0000255" key="1">
    <source>
        <dbReference type="HAMAP-Rule" id="MF_01629"/>
    </source>
</evidence>
<proteinExistence type="inferred from homology"/>
<accession>Q1GHI5</accession>
<sequence>MSDREGLFGGDDPFEIARKWLAEATETEINDPNAIALATVDASGMPNSRMVLLKEIEDAAFVFYTNYESAKAQEIEASGTASFVMHWKSLRRQIRVRGHVTKENGPQADEYFASRSLKSRLGAWASKQSQPLASRSALMAEVAKITAQKGPNPKRPEFWGGYRITPIEIEFWADGAFRLHDRFVWRKNTSHDNWTITRLSP</sequence>
<gene>
    <name evidence="1" type="primary">pdxH</name>
    <name type="ordered locus">TM1040_1148</name>
</gene>
<comment type="function">
    <text evidence="1">Catalyzes the oxidation of either pyridoxine 5'-phosphate (PNP) or pyridoxamine 5'-phosphate (PMP) into pyridoxal 5'-phosphate (PLP).</text>
</comment>
<comment type="catalytic activity">
    <reaction evidence="1">
        <text>pyridoxamine 5'-phosphate + O2 + H2O = pyridoxal 5'-phosphate + H2O2 + NH4(+)</text>
        <dbReference type="Rhea" id="RHEA:15817"/>
        <dbReference type="ChEBI" id="CHEBI:15377"/>
        <dbReference type="ChEBI" id="CHEBI:15379"/>
        <dbReference type="ChEBI" id="CHEBI:16240"/>
        <dbReference type="ChEBI" id="CHEBI:28938"/>
        <dbReference type="ChEBI" id="CHEBI:58451"/>
        <dbReference type="ChEBI" id="CHEBI:597326"/>
        <dbReference type="EC" id="1.4.3.5"/>
    </reaction>
</comment>
<comment type="catalytic activity">
    <reaction evidence="1">
        <text>pyridoxine 5'-phosphate + O2 = pyridoxal 5'-phosphate + H2O2</text>
        <dbReference type="Rhea" id="RHEA:15149"/>
        <dbReference type="ChEBI" id="CHEBI:15379"/>
        <dbReference type="ChEBI" id="CHEBI:16240"/>
        <dbReference type="ChEBI" id="CHEBI:58589"/>
        <dbReference type="ChEBI" id="CHEBI:597326"/>
        <dbReference type="EC" id="1.4.3.5"/>
    </reaction>
</comment>
<comment type="cofactor">
    <cofactor evidence="1">
        <name>FMN</name>
        <dbReference type="ChEBI" id="CHEBI:58210"/>
    </cofactor>
    <text evidence="1">Binds 1 FMN per subunit.</text>
</comment>
<comment type="pathway">
    <text evidence="1">Cofactor metabolism; pyridoxal 5'-phosphate salvage; pyridoxal 5'-phosphate from pyridoxamine 5'-phosphate: step 1/1.</text>
</comment>
<comment type="pathway">
    <text evidence="1">Cofactor metabolism; pyridoxal 5'-phosphate salvage; pyridoxal 5'-phosphate from pyridoxine 5'-phosphate: step 1/1.</text>
</comment>
<comment type="subunit">
    <text evidence="1">Homodimer.</text>
</comment>
<comment type="similarity">
    <text evidence="1">Belongs to the pyridoxamine 5'-phosphate oxidase family.</text>
</comment>
<name>PDXH_RUEST</name>
<dbReference type="EC" id="1.4.3.5" evidence="1"/>
<dbReference type="EMBL" id="CP000377">
    <property type="protein sequence ID" value="ABF63881.1"/>
    <property type="molecule type" value="Genomic_DNA"/>
</dbReference>
<dbReference type="RefSeq" id="WP_011538488.1">
    <property type="nucleotide sequence ID" value="NC_008044.1"/>
</dbReference>
<dbReference type="SMR" id="Q1GHI5"/>
<dbReference type="STRING" id="292414.TM1040_1148"/>
<dbReference type="KEGG" id="sit:TM1040_1148"/>
<dbReference type="eggNOG" id="COG0259">
    <property type="taxonomic scope" value="Bacteria"/>
</dbReference>
<dbReference type="HOGENOM" id="CLU_032263_2_3_5"/>
<dbReference type="OrthoDB" id="9780392at2"/>
<dbReference type="UniPathway" id="UPA01068">
    <property type="reaction ID" value="UER00304"/>
</dbReference>
<dbReference type="UniPathway" id="UPA01068">
    <property type="reaction ID" value="UER00305"/>
</dbReference>
<dbReference type="Proteomes" id="UP000000636">
    <property type="component" value="Chromosome"/>
</dbReference>
<dbReference type="GO" id="GO:0010181">
    <property type="term" value="F:FMN binding"/>
    <property type="evidence" value="ECO:0007669"/>
    <property type="project" value="UniProtKB-UniRule"/>
</dbReference>
<dbReference type="GO" id="GO:0004733">
    <property type="term" value="F:pyridoxamine phosphate oxidase activity"/>
    <property type="evidence" value="ECO:0007669"/>
    <property type="project" value="UniProtKB-UniRule"/>
</dbReference>
<dbReference type="GO" id="GO:0008615">
    <property type="term" value="P:pyridoxine biosynthetic process"/>
    <property type="evidence" value="ECO:0007669"/>
    <property type="project" value="UniProtKB-KW"/>
</dbReference>
<dbReference type="Gene3D" id="2.30.110.10">
    <property type="entry name" value="Electron Transport, Fmn-binding Protein, Chain A"/>
    <property type="match status" value="1"/>
</dbReference>
<dbReference type="HAMAP" id="MF_01629">
    <property type="entry name" value="PdxH"/>
    <property type="match status" value="1"/>
</dbReference>
<dbReference type="InterPro" id="IPR000659">
    <property type="entry name" value="Pyridox_Oxase"/>
</dbReference>
<dbReference type="InterPro" id="IPR019740">
    <property type="entry name" value="Pyridox_Oxase_CS"/>
</dbReference>
<dbReference type="InterPro" id="IPR011576">
    <property type="entry name" value="Pyridox_Oxase_N"/>
</dbReference>
<dbReference type="InterPro" id="IPR019576">
    <property type="entry name" value="Pyridoxamine_oxidase_dimer_C"/>
</dbReference>
<dbReference type="InterPro" id="IPR012349">
    <property type="entry name" value="Split_barrel_FMN-bd"/>
</dbReference>
<dbReference type="NCBIfam" id="TIGR00558">
    <property type="entry name" value="pdxH"/>
    <property type="match status" value="1"/>
</dbReference>
<dbReference type="NCBIfam" id="NF004231">
    <property type="entry name" value="PRK05679.1"/>
    <property type="match status" value="1"/>
</dbReference>
<dbReference type="PANTHER" id="PTHR10851:SF0">
    <property type="entry name" value="PYRIDOXINE-5'-PHOSPHATE OXIDASE"/>
    <property type="match status" value="1"/>
</dbReference>
<dbReference type="PANTHER" id="PTHR10851">
    <property type="entry name" value="PYRIDOXINE-5-PHOSPHATE OXIDASE"/>
    <property type="match status" value="1"/>
</dbReference>
<dbReference type="Pfam" id="PF10590">
    <property type="entry name" value="PNP_phzG_C"/>
    <property type="match status" value="1"/>
</dbReference>
<dbReference type="Pfam" id="PF01243">
    <property type="entry name" value="PNPOx_N"/>
    <property type="match status" value="1"/>
</dbReference>
<dbReference type="PIRSF" id="PIRSF000190">
    <property type="entry name" value="Pyd_amn-ph_oxd"/>
    <property type="match status" value="1"/>
</dbReference>
<dbReference type="SUPFAM" id="SSF50475">
    <property type="entry name" value="FMN-binding split barrel"/>
    <property type="match status" value="1"/>
</dbReference>
<dbReference type="PROSITE" id="PS01064">
    <property type="entry name" value="PYRIDOX_OXIDASE"/>
    <property type="match status" value="1"/>
</dbReference>
<protein>
    <recommendedName>
        <fullName evidence="1">Pyridoxine/pyridoxamine 5'-phosphate oxidase</fullName>
        <ecNumber evidence="1">1.4.3.5</ecNumber>
    </recommendedName>
    <alternativeName>
        <fullName evidence="1">PNP/PMP oxidase</fullName>
        <shortName evidence="1">PNPOx</shortName>
    </alternativeName>
    <alternativeName>
        <fullName evidence="1">Pyridoxal 5'-phosphate synthase</fullName>
    </alternativeName>
</protein>
<reference key="1">
    <citation type="submission" date="2006-05" db="EMBL/GenBank/DDBJ databases">
        <title>Complete sequence of chromosome of Silicibacter sp. TM1040.</title>
        <authorList>
            <consortium name="US DOE Joint Genome Institute"/>
            <person name="Copeland A."/>
            <person name="Lucas S."/>
            <person name="Lapidus A."/>
            <person name="Barry K."/>
            <person name="Detter J.C."/>
            <person name="Glavina del Rio T."/>
            <person name="Hammon N."/>
            <person name="Israni S."/>
            <person name="Dalin E."/>
            <person name="Tice H."/>
            <person name="Pitluck S."/>
            <person name="Brettin T."/>
            <person name="Bruce D."/>
            <person name="Han C."/>
            <person name="Tapia R."/>
            <person name="Goodwin L."/>
            <person name="Thompson L.S."/>
            <person name="Gilna P."/>
            <person name="Schmutz J."/>
            <person name="Larimer F."/>
            <person name="Land M."/>
            <person name="Hauser L."/>
            <person name="Kyrpides N."/>
            <person name="Kim E."/>
            <person name="Belas R."/>
            <person name="Moran M.A."/>
            <person name="Buchan A."/>
            <person name="Gonzalez J.M."/>
            <person name="Schell M.A."/>
            <person name="Sun F."/>
            <person name="Richardson P."/>
        </authorList>
    </citation>
    <scope>NUCLEOTIDE SEQUENCE [LARGE SCALE GENOMIC DNA]</scope>
    <source>
        <strain>TM1040</strain>
    </source>
</reference>
<feature type="chain" id="PRO_0000255891" description="Pyridoxine/pyridoxamine 5'-phosphate oxidase">
    <location>
        <begin position="1"/>
        <end position="201"/>
    </location>
</feature>
<feature type="binding site" evidence="1">
    <location>
        <begin position="49"/>
        <end position="54"/>
    </location>
    <ligand>
        <name>FMN</name>
        <dbReference type="ChEBI" id="CHEBI:58210"/>
    </ligand>
</feature>
<feature type="binding site" evidence="1">
    <location>
        <position position="54"/>
    </location>
    <ligand>
        <name>substrate</name>
    </ligand>
</feature>
<feature type="binding site" evidence="1">
    <location>
        <begin position="64"/>
        <end position="65"/>
    </location>
    <ligand>
        <name>FMN</name>
        <dbReference type="ChEBI" id="CHEBI:58210"/>
    </ligand>
</feature>
<feature type="binding site" evidence="1">
    <location>
        <position position="71"/>
    </location>
    <ligand>
        <name>FMN</name>
        <dbReference type="ChEBI" id="CHEBI:58210"/>
    </ligand>
</feature>
<feature type="binding site" evidence="1">
    <location>
        <position position="93"/>
    </location>
    <ligand>
        <name>FMN</name>
        <dbReference type="ChEBI" id="CHEBI:58210"/>
    </ligand>
</feature>
<feature type="binding site" evidence="1">
    <location>
        <position position="111"/>
    </location>
    <ligand>
        <name>substrate</name>
    </ligand>
</feature>
<feature type="binding site" evidence="1">
    <location>
        <position position="115"/>
    </location>
    <ligand>
        <name>substrate</name>
    </ligand>
</feature>
<feature type="binding site" evidence="1">
    <location>
        <position position="119"/>
    </location>
    <ligand>
        <name>substrate</name>
    </ligand>
</feature>
<feature type="binding site" evidence="1">
    <location>
        <begin position="128"/>
        <end position="129"/>
    </location>
    <ligand>
        <name>FMN</name>
        <dbReference type="ChEBI" id="CHEBI:58210"/>
    </ligand>
</feature>
<feature type="binding site" evidence="1">
    <location>
        <position position="172"/>
    </location>
    <ligand>
        <name>FMN</name>
        <dbReference type="ChEBI" id="CHEBI:58210"/>
    </ligand>
</feature>
<feature type="binding site" evidence="1">
    <location>
        <begin position="178"/>
        <end position="180"/>
    </location>
    <ligand>
        <name>substrate</name>
    </ligand>
</feature>
<feature type="binding site" evidence="1">
    <location>
        <position position="182"/>
    </location>
    <ligand>
        <name>FMN</name>
        <dbReference type="ChEBI" id="CHEBI:58210"/>
    </ligand>
</feature>